<reference key="1">
    <citation type="journal article" date="2000" name="DNA Res.">
        <title>Complete genome structure of the nitrogen-fixing symbiotic bacterium Mesorhizobium loti.</title>
        <authorList>
            <person name="Kaneko T."/>
            <person name="Nakamura Y."/>
            <person name="Sato S."/>
            <person name="Asamizu E."/>
            <person name="Kato T."/>
            <person name="Sasamoto S."/>
            <person name="Watanabe A."/>
            <person name="Idesawa K."/>
            <person name="Ishikawa A."/>
            <person name="Kawashima K."/>
            <person name="Kimura T."/>
            <person name="Kishida Y."/>
            <person name="Kiyokawa C."/>
            <person name="Kohara M."/>
            <person name="Matsumoto M."/>
            <person name="Matsuno A."/>
            <person name="Mochizuki Y."/>
            <person name="Nakayama S."/>
            <person name="Nakazaki N."/>
            <person name="Shimpo S."/>
            <person name="Sugimoto M."/>
            <person name="Takeuchi C."/>
            <person name="Yamada M."/>
            <person name="Tabata S."/>
        </authorList>
    </citation>
    <scope>NUCLEOTIDE SEQUENCE [LARGE SCALE GENOMIC DNA]</scope>
    <source>
        <strain>LMG 29417 / CECT 9101 / MAFF 303099</strain>
    </source>
</reference>
<protein>
    <recommendedName>
        <fullName evidence="1">Arginine deiminase</fullName>
        <shortName evidence="1">ADI</shortName>
        <ecNumber evidence="1">3.5.3.6</ecNumber>
    </recommendedName>
    <alternativeName>
        <fullName evidence="1">Arginine dihydrolase</fullName>
        <shortName evidence="1">AD</shortName>
    </alternativeName>
</protein>
<gene>
    <name evidence="1" type="primary">arcA</name>
    <name type="ordered locus">mll6733</name>
</gene>
<name>ARCA_RHILO</name>
<sequence length="412" mass="45661">METKFGVHSEVGQLRKVMVCAPGRAHQRLTPSNCDALLFDDVLWVDNAKRDHFDFMTKMRDRGVEVVEMHNLLAETVAVPEGKKWILDNQVVPNQIGLGLVDEVRSYLEGLSNRDLAETLIGGLSTHEFPESIGGEQLELIRDAAGVNEYLLPPLPNTLYTRDTTCWIYGGVTQNPLYWPARHEETILTTSIYKFHPDFAGKVNVWWGDPTKDWGLATLEGGDVMPIGKGNVLIGMSERTSRQAISQLAATLFEKGAAERVIVAAMPKLRAAMHLDTVFTFADRDCVLLYPDIVNGIEAFSYRPDGKGGVELHKDKGTFVETVRDALGLKKMRVVETGGNAYMRERTQWDSGANLVCASPGVVYAYDRNTYTNTLLRKEGIEVITIIGAELGRGRGGGHCMTCPIIRDAVDY</sequence>
<keyword id="KW-0056">Arginine metabolism</keyword>
<keyword id="KW-0963">Cytoplasm</keyword>
<keyword id="KW-0378">Hydrolase</keyword>
<accession>Q988I1</accession>
<organism>
    <name type="scientific">Mesorhizobium japonicum (strain LMG 29417 / CECT 9101 / MAFF 303099)</name>
    <name type="common">Mesorhizobium loti (strain MAFF 303099)</name>
    <dbReference type="NCBI Taxonomy" id="266835"/>
    <lineage>
        <taxon>Bacteria</taxon>
        <taxon>Pseudomonadati</taxon>
        <taxon>Pseudomonadota</taxon>
        <taxon>Alphaproteobacteria</taxon>
        <taxon>Hyphomicrobiales</taxon>
        <taxon>Phyllobacteriaceae</taxon>
        <taxon>Mesorhizobium</taxon>
    </lineage>
</organism>
<dbReference type="EC" id="3.5.3.6" evidence="1"/>
<dbReference type="EMBL" id="BA000012">
    <property type="protein sequence ID" value="BAB52969.1"/>
    <property type="molecule type" value="Genomic_DNA"/>
</dbReference>
<dbReference type="SMR" id="Q988I1"/>
<dbReference type="KEGG" id="mlo:mll6733"/>
<dbReference type="eggNOG" id="COG2235">
    <property type="taxonomic scope" value="Bacteria"/>
</dbReference>
<dbReference type="HOGENOM" id="CLU_052662_0_0_5"/>
<dbReference type="UniPathway" id="UPA00254">
    <property type="reaction ID" value="UER00364"/>
</dbReference>
<dbReference type="Proteomes" id="UP000000552">
    <property type="component" value="Chromosome"/>
</dbReference>
<dbReference type="GO" id="GO:0005737">
    <property type="term" value="C:cytoplasm"/>
    <property type="evidence" value="ECO:0007669"/>
    <property type="project" value="UniProtKB-SubCell"/>
</dbReference>
<dbReference type="GO" id="GO:0016990">
    <property type="term" value="F:arginine deiminase activity"/>
    <property type="evidence" value="ECO:0007669"/>
    <property type="project" value="UniProtKB-UniRule"/>
</dbReference>
<dbReference type="GO" id="GO:0019547">
    <property type="term" value="P:arginine catabolic process to ornithine"/>
    <property type="evidence" value="ECO:0007669"/>
    <property type="project" value="UniProtKB-UniRule"/>
</dbReference>
<dbReference type="GO" id="GO:0019546">
    <property type="term" value="P:arginine deiminase pathway"/>
    <property type="evidence" value="ECO:0007669"/>
    <property type="project" value="TreeGrafter"/>
</dbReference>
<dbReference type="Gene3D" id="1.10.3930.10">
    <property type="entry name" value="Arginine deiminase"/>
    <property type="match status" value="1"/>
</dbReference>
<dbReference type="Gene3D" id="3.75.10.10">
    <property type="entry name" value="L-arginine/glycine Amidinotransferase, Chain A"/>
    <property type="match status" value="1"/>
</dbReference>
<dbReference type="HAMAP" id="MF_00242">
    <property type="entry name" value="Arg_deiminase"/>
    <property type="match status" value="1"/>
</dbReference>
<dbReference type="InterPro" id="IPR003876">
    <property type="entry name" value="Arg_deiminase"/>
</dbReference>
<dbReference type="NCBIfam" id="NF002381">
    <property type="entry name" value="PRK01388.1"/>
    <property type="match status" value="1"/>
</dbReference>
<dbReference type="PANTHER" id="PTHR47271">
    <property type="entry name" value="ARGININE DEIMINASE"/>
    <property type="match status" value="1"/>
</dbReference>
<dbReference type="PANTHER" id="PTHR47271:SF3">
    <property type="entry name" value="ARGININE DEIMINASE"/>
    <property type="match status" value="1"/>
</dbReference>
<dbReference type="Pfam" id="PF02274">
    <property type="entry name" value="ADI"/>
    <property type="match status" value="1"/>
</dbReference>
<dbReference type="PIRSF" id="PIRSF006356">
    <property type="entry name" value="Arg_deiminase"/>
    <property type="match status" value="1"/>
</dbReference>
<dbReference type="PRINTS" id="PR01466">
    <property type="entry name" value="ARGDEIMINASE"/>
</dbReference>
<dbReference type="SUPFAM" id="SSF55909">
    <property type="entry name" value="Pentein"/>
    <property type="match status" value="1"/>
</dbReference>
<feature type="chain" id="PRO_0000182229" description="Arginine deiminase">
    <location>
        <begin position="1"/>
        <end position="412"/>
    </location>
</feature>
<feature type="active site" description="Amidino-cysteine intermediate" evidence="1">
    <location>
        <position position="400"/>
    </location>
</feature>
<comment type="catalytic activity">
    <reaction evidence="1">
        <text>L-arginine + H2O = L-citrulline + NH4(+)</text>
        <dbReference type="Rhea" id="RHEA:19597"/>
        <dbReference type="ChEBI" id="CHEBI:15377"/>
        <dbReference type="ChEBI" id="CHEBI:28938"/>
        <dbReference type="ChEBI" id="CHEBI:32682"/>
        <dbReference type="ChEBI" id="CHEBI:57743"/>
        <dbReference type="EC" id="3.5.3.6"/>
    </reaction>
</comment>
<comment type="pathway">
    <text evidence="1">Amino-acid degradation; L-arginine degradation via ADI pathway; carbamoyl phosphate from L-arginine: step 1/2.</text>
</comment>
<comment type="subcellular location">
    <subcellularLocation>
        <location evidence="1">Cytoplasm</location>
    </subcellularLocation>
</comment>
<comment type="similarity">
    <text evidence="1">Belongs to the arginine deiminase family.</text>
</comment>
<evidence type="ECO:0000255" key="1">
    <source>
        <dbReference type="HAMAP-Rule" id="MF_00242"/>
    </source>
</evidence>
<proteinExistence type="inferred from homology"/>